<name>Y1114_NEIMA</name>
<dbReference type="EMBL" id="AL157959">
    <property type="protein sequence ID" value="CAM08323.1"/>
    <property type="molecule type" value="Genomic_DNA"/>
</dbReference>
<dbReference type="PIR" id="F81877">
    <property type="entry name" value="F81877"/>
</dbReference>
<dbReference type="RefSeq" id="WP_002236895.1">
    <property type="nucleotide sequence ID" value="NC_003116.1"/>
</dbReference>
<dbReference type="SMR" id="Q9JUV9"/>
<dbReference type="EnsemblBacteria" id="CAM08323">
    <property type="protein sequence ID" value="CAM08323"/>
    <property type="gene ID" value="NMA1114"/>
</dbReference>
<dbReference type="GeneID" id="93386276"/>
<dbReference type="KEGG" id="nma:NMA1114"/>
<dbReference type="HOGENOM" id="CLU_061989_0_0_4"/>
<dbReference type="Proteomes" id="UP000000626">
    <property type="component" value="Chromosome"/>
</dbReference>
<dbReference type="GO" id="GO:0005829">
    <property type="term" value="C:cytosol"/>
    <property type="evidence" value="ECO:0007669"/>
    <property type="project" value="TreeGrafter"/>
</dbReference>
<dbReference type="GO" id="GO:0033194">
    <property type="term" value="P:response to hydroperoxide"/>
    <property type="evidence" value="ECO:0007669"/>
    <property type="project" value="TreeGrafter"/>
</dbReference>
<dbReference type="HAMAP" id="MF_00652">
    <property type="entry name" value="UPF0246"/>
    <property type="match status" value="1"/>
</dbReference>
<dbReference type="InterPro" id="IPR005583">
    <property type="entry name" value="YaaA"/>
</dbReference>
<dbReference type="NCBIfam" id="NF002541">
    <property type="entry name" value="PRK02101.1-1"/>
    <property type="match status" value="1"/>
</dbReference>
<dbReference type="NCBIfam" id="NF002542">
    <property type="entry name" value="PRK02101.1-3"/>
    <property type="match status" value="1"/>
</dbReference>
<dbReference type="PANTHER" id="PTHR30283:SF4">
    <property type="entry name" value="PEROXIDE STRESS RESISTANCE PROTEIN YAAA"/>
    <property type="match status" value="1"/>
</dbReference>
<dbReference type="PANTHER" id="PTHR30283">
    <property type="entry name" value="PEROXIDE STRESS RESPONSE PROTEIN YAAA"/>
    <property type="match status" value="1"/>
</dbReference>
<dbReference type="Pfam" id="PF03883">
    <property type="entry name" value="H2O2_YaaD"/>
    <property type="match status" value="1"/>
</dbReference>
<comment type="similarity">
    <text evidence="1">Belongs to the UPF0246 family.</text>
</comment>
<accession>Q9JUV9</accession>
<accession>A1IRD7</accession>
<gene>
    <name type="ordered locus">NMA1114</name>
</gene>
<organism>
    <name type="scientific">Neisseria meningitidis serogroup A / serotype 4A (strain DSM 15465 / Z2491)</name>
    <dbReference type="NCBI Taxonomy" id="122587"/>
    <lineage>
        <taxon>Bacteria</taxon>
        <taxon>Pseudomonadati</taxon>
        <taxon>Pseudomonadota</taxon>
        <taxon>Betaproteobacteria</taxon>
        <taxon>Neisseriales</taxon>
        <taxon>Neisseriaceae</taxon>
        <taxon>Neisseria</taxon>
    </lineage>
</organism>
<sequence>MFFVLSPAKNLNEKDPAPVSEFTQPDLLAESDILMQQLRELAPQQIAELMHVSDKIALLNAQRNAEWNTPFTPENAKQAVFMFNGDVYEGMDANTLNTDQIQYLQGRVRLLSGLYGLLRPLDLIQPYRLEMGTAFANLRGKNLYEFWGDIITNLLNDTLAQAGSNTLVNLASQEYFKSVNTKKLRARLITPIFKDEKNGKYKIISFYAKRARGLMVRYAAEHNITDPEMLKNFNYEGYAFNDAASNESEWVFMRSEQIK</sequence>
<reference key="1">
    <citation type="journal article" date="2000" name="Nature">
        <title>Complete DNA sequence of a serogroup A strain of Neisseria meningitidis Z2491.</title>
        <authorList>
            <person name="Parkhill J."/>
            <person name="Achtman M."/>
            <person name="James K.D."/>
            <person name="Bentley S.D."/>
            <person name="Churcher C.M."/>
            <person name="Klee S.R."/>
            <person name="Morelli G."/>
            <person name="Basham D."/>
            <person name="Brown D."/>
            <person name="Chillingworth T."/>
            <person name="Davies R.M."/>
            <person name="Davis P."/>
            <person name="Devlin K."/>
            <person name="Feltwell T."/>
            <person name="Hamlin N."/>
            <person name="Holroyd S."/>
            <person name="Jagels K."/>
            <person name="Leather S."/>
            <person name="Moule S."/>
            <person name="Mungall K.L."/>
            <person name="Quail M.A."/>
            <person name="Rajandream M.A."/>
            <person name="Rutherford K.M."/>
            <person name="Simmonds M."/>
            <person name="Skelton J."/>
            <person name="Whitehead S."/>
            <person name="Spratt B.G."/>
            <person name="Barrell B.G."/>
        </authorList>
    </citation>
    <scope>NUCLEOTIDE SEQUENCE [LARGE SCALE GENOMIC DNA]</scope>
    <source>
        <strain>DSM 15465 / Z2491</strain>
    </source>
</reference>
<protein>
    <recommendedName>
        <fullName evidence="1">UPF0246 protein NMA1114</fullName>
    </recommendedName>
</protein>
<evidence type="ECO:0000255" key="1">
    <source>
        <dbReference type="HAMAP-Rule" id="MF_00652"/>
    </source>
</evidence>
<proteinExistence type="inferred from homology"/>
<feature type="chain" id="PRO_0000203990" description="UPF0246 protein NMA1114">
    <location>
        <begin position="1"/>
        <end position="259"/>
    </location>
</feature>